<accession>Q1GBJ6</accession>
<name>IF1_LACDA</name>
<sequence length="73" mass="8274">MAKDDVIEVEGKVVDTLPNAMFKVELENGATILAHVSGKIRMHYIRILPGDRVTVELSPYDLTKGRITYRFIK</sequence>
<feature type="chain" id="PRO_0000263813" description="Translation initiation factor IF-1">
    <location>
        <begin position="1"/>
        <end position="73"/>
    </location>
</feature>
<feature type="domain" description="S1-like" evidence="1">
    <location>
        <begin position="1"/>
        <end position="72"/>
    </location>
</feature>
<comment type="function">
    <text evidence="1">One of the essential components for the initiation of protein synthesis. Stabilizes the binding of IF-2 and IF-3 on the 30S subunit to which N-formylmethionyl-tRNA(fMet) subsequently binds. Helps modulate mRNA selection, yielding the 30S pre-initiation complex (PIC). Upon addition of the 50S ribosomal subunit IF-1, IF-2 and IF-3 are released leaving the mature 70S translation initiation complex.</text>
</comment>
<comment type="subunit">
    <text evidence="1">Component of the 30S ribosomal translation pre-initiation complex which assembles on the 30S ribosome in the order IF-2 and IF-3, IF-1 and N-formylmethionyl-tRNA(fMet); mRNA recruitment can occur at any time during PIC assembly.</text>
</comment>
<comment type="subcellular location">
    <subcellularLocation>
        <location evidence="1">Cytoplasm</location>
    </subcellularLocation>
</comment>
<comment type="similarity">
    <text evidence="1">Belongs to the IF-1 family.</text>
</comment>
<gene>
    <name evidence="1" type="primary">infA</name>
    <name type="ordered locus">Ldb0418</name>
</gene>
<organism>
    <name type="scientific">Lactobacillus delbrueckii subsp. bulgaricus (strain ATCC 11842 / DSM 20081 / BCRC 10696 / JCM 1002 / NBRC 13953 / NCIMB 11778 / NCTC 12712 / WDCM 00102 / Lb 14)</name>
    <dbReference type="NCBI Taxonomy" id="390333"/>
    <lineage>
        <taxon>Bacteria</taxon>
        <taxon>Bacillati</taxon>
        <taxon>Bacillota</taxon>
        <taxon>Bacilli</taxon>
        <taxon>Lactobacillales</taxon>
        <taxon>Lactobacillaceae</taxon>
        <taxon>Lactobacillus</taxon>
    </lineage>
</organism>
<proteinExistence type="inferred from homology"/>
<evidence type="ECO:0000255" key="1">
    <source>
        <dbReference type="HAMAP-Rule" id="MF_00075"/>
    </source>
</evidence>
<dbReference type="EMBL" id="CR954253">
    <property type="protein sequence ID" value="CAI97253.1"/>
    <property type="molecule type" value="Genomic_DNA"/>
</dbReference>
<dbReference type="RefSeq" id="WP_002878178.1">
    <property type="nucleotide sequence ID" value="NZ_JQAV01000001.1"/>
</dbReference>
<dbReference type="SMR" id="Q1GBJ6"/>
<dbReference type="STRING" id="390333.Ldb0418"/>
<dbReference type="GeneID" id="93290579"/>
<dbReference type="KEGG" id="ldb:Ldb0418"/>
<dbReference type="eggNOG" id="COG0361">
    <property type="taxonomic scope" value="Bacteria"/>
</dbReference>
<dbReference type="HOGENOM" id="CLU_151267_1_0_9"/>
<dbReference type="BioCyc" id="LDEL390333:LDB_RS01780-MONOMER"/>
<dbReference type="Proteomes" id="UP000001259">
    <property type="component" value="Chromosome"/>
</dbReference>
<dbReference type="GO" id="GO:0005829">
    <property type="term" value="C:cytosol"/>
    <property type="evidence" value="ECO:0007669"/>
    <property type="project" value="TreeGrafter"/>
</dbReference>
<dbReference type="GO" id="GO:0043022">
    <property type="term" value="F:ribosome binding"/>
    <property type="evidence" value="ECO:0007669"/>
    <property type="project" value="UniProtKB-UniRule"/>
</dbReference>
<dbReference type="GO" id="GO:0019843">
    <property type="term" value="F:rRNA binding"/>
    <property type="evidence" value="ECO:0007669"/>
    <property type="project" value="UniProtKB-UniRule"/>
</dbReference>
<dbReference type="GO" id="GO:0003743">
    <property type="term" value="F:translation initiation factor activity"/>
    <property type="evidence" value="ECO:0007669"/>
    <property type="project" value="UniProtKB-UniRule"/>
</dbReference>
<dbReference type="CDD" id="cd04451">
    <property type="entry name" value="S1_IF1"/>
    <property type="match status" value="1"/>
</dbReference>
<dbReference type="FunFam" id="2.40.50.140:FF:000002">
    <property type="entry name" value="Translation initiation factor IF-1"/>
    <property type="match status" value="1"/>
</dbReference>
<dbReference type="Gene3D" id="2.40.50.140">
    <property type="entry name" value="Nucleic acid-binding proteins"/>
    <property type="match status" value="1"/>
</dbReference>
<dbReference type="HAMAP" id="MF_00075">
    <property type="entry name" value="IF_1"/>
    <property type="match status" value="1"/>
</dbReference>
<dbReference type="InterPro" id="IPR012340">
    <property type="entry name" value="NA-bd_OB-fold"/>
</dbReference>
<dbReference type="InterPro" id="IPR006196">
    <property type="entry name" value="RNA-binding_domain_S1_IF1"/>
</dbReference>
<dbReference type="InterPro" id="IPR003029">
    <property type="entry name" value="S1_domain"/>
</dbReference>
<dbReference type="InterPro" id="IPR004368">
    <property type="entry name" value="TIF_IF1"/>
</dbReference>
<dbReference type="NCBIfam" id="TIGR00008">
    <property type="entry name" value="infA"/>
    <property type="match status" value="1"/>
</dbReference>
<dbReference type="PANTHER" id="PTHR33370">
    <property type="entry name" value="TRANSLATION INITIATION FACTOR IF-1, CHLOROPLASTIC"/>
    <property type="match status" value="1"/>
</dbReference>
<dbReference type="PANTHER" id="PTHR33370:SF1">
    <property type="entry name" value="TRANSLATION INITIATION FACTOR IF-1, CHLOROPLASTIC"/>
    <property type="match status" value="1"/>
</dbReference>
<dbReference type="Pfam" id="PF01176">
    <property type="entry name" value="eIF-1a"/>
    <property type="match status" value="1"/>
</dbReference>
<dbReference type="SMART" id="SM00316">
    <property type="entry name" value="S1"/>
    <property type="match status" value="1"/>
</dbReference>
<dbReference type="SUPFAM" id="SSF50249">
    <property type="entry name" value="Nucleic acid-binding proteins"/>
    <property type="match status" value="1"/>
</dbReference>
<dbReference type="PROSITE" id="PS50832">
    <property type="entry name" value="S1_IF1_TYPE"/>
    <property type="match status" value="1"/>
</dbReference>
<protein>
    <recommendedName>
        <fullName evidence="1">Translation initiation factor IF-1</fullName>
    </recommendedName>
</protein>
<reference key="1">
    <citation type="journal article" date="2006" name="Proc. Natl. Acad. Sci. U.S.A.">
        <title>The complete genome sequence of Lactobacillus bulgaricus reveals extensive and ongoing reductive evolution.</title>
        <authorList>
            <person name="van de Guchte M."/>
            <person name="Penaud S."/>
            <person name="Grimaldi C."/>
            <person name="Barbe V."/>
            <person name="Bryson K."/>
            <person name="Nicolas P."/>
            <person name="Robert C."/>
            <person name="Oztas S."/>
            <person name="Mangenot S."/>
            <person name="Couloux A."/>
            <person name="Loux V."/>
            <person name="Dervyn R."/>
            <person name="Bossy R."/>
            <person name="Bolotin A."/>
            <person name="Batto J.-M."/>
            <person name="Walunas T."/>
            <person name="Gibrat J.-F."/>
            <person name="Bessieres P."/>
            <person name="Weissenbach J."/>
            <person name="Ehrlich S.D."/>
            <person name="Maguin E."/>
        </authorList>
    </citation>
    <scope>NUCLEOTIDE SEQUENCE [LARGE SCALE GENOMIC DNA]</scope>
    <source>
        <strain>ATCC 11842 / DSM 20081 / BCRC 10696 / JCM 1002 / NBRC 13953 / NCIMB 11778 / NCTC 12712 / WDCM 00102 / Lb 14</strain>
    </source>
</reference>
<keyword id="KW-0963">Cytoplasm</keyword>
<keyword id="KW-0396">Initiation factor</keyword>
<keyword id="KW-0648">Protein biosynthesis</keyword>
<keyword id="KW-1185">Reference proteome</keyword>
<keyword id="KW-0694">RNA-binding</keyword>
<keyword id="KW-0699">rRNA-binding</keyword>